<feature type="chain" id="PRO_0000137445" description="Eukaryotic translation initiation factor 2 subunit gamma">
    <location>
        <begin position="1"/>
        <end position="439"/>
    </location>
</feature>
<feature type="domain" description="tr-type G" evidence="3">
    <location>
        <begin position="11"/>
        <end position="215"/>
    </location>
</feature>
<feature type="region of interest" description="G1" evidence="3">
    <location>
        <begin position="20"/>
        <end position="27"/>
    </location>
</feature>
<feature type="region of interest" description="G2" evidence="3">
    <location>
        <begin position="48"/>
        <end position="52"/>
    </location>
</feature>
<feature type="region of interest" description="G3" evidence="3">
    <location>
        <begin position="103"/>
        <end position="106"/>
    </location>
</feature>
<feature type="region of interest" description="G4" evidence="3">
    <location>
        <begin position="159"/>
        <end position="162"/>
    </location>
</feature>
<feature type="region of interest" description="G5" evidence="3">
    <location>
        <begin position="193"/>
        <end position="195"/>
    </location>
</feature>
<feature type="region of interest" description="Interacts with CDC123" evidence="1">
    <location>
        <begin position="415"/>
        <end position="427"/>
    </location>
</feature>
<feature type="binding site" evidence="1">
    <location>
        <begin position="23"/>
        <end position="28"/>
    </location>
    <ligand>
        <name>GTP</name>
        <dbReference type="ChEBI" id="CHEBI:37565"/>
    </ligand>
</feature>
<feature type="binding site" evidence="1">
    <location>
        <begin position="159"/>
        <end position="162"/>
    </location>
    <ligand>
        <name>GTP</name>
        <dbReference type="ChEBI" id="CHEBI:37565"/>
    </ligand>
</feature>
<feature type="binding site" evidence="1">
    <location>
        <begin position="193"/>
        <end position="195"/>
    </location>
    <ligand>
        <name>GTP</name>
        <dbReference type="ChEBI" id="CHEBI:37565"/>
    </ligand>
</feature>
<feature type="sequence conflict" description="In Ref. 1; CAA07260." evidence="4" ref="1">
    <original>K</original>
    <variation>R</variation>
    <location>
        <position position="10"/>
    </location>
</feature>
<feature type="sequence conflict" description="In Ref. 1; CAA07260." evidence="4" ref="1">
    <original>S</original>
    <variation>F</variation>
    <location>
        <position position="287"/>
    </location>
</feature>
<feature type="sequence conflict" description="In Ref. 1; CAA07260." evidence="4" ref="1">
    <original>K</original>
    <variation>N</variation>
    <location>
        <position position="355"/>
    </location>
</feature>
<proteinExistence type="inferred from homology"/>
<accession>O96719</accession>
<accession>Q8SSL5</accession>
<organism>
    <name type="scientific">Encephalitozoon cuniculi (strain GB-M1)</name>
    <name type="common">Microsporidian parasite</name>
    <dbReference type="NCBI Taxonomy" id="284813"/>
    <lineage>
        <taxon>Eukaryota</taxon>
        <taxon>Fungi</taxon>
        <taxon>Fungi incertae sedis</taxon>
        <taxon>Microsporidia</taxon>
        <taxon>Unikaryonidae</taxon>
        <taxon>Encephalitozoon</taxon>
    </lineage>
</organism>
<sequence length="439" mass="47773">MNDALEIMKKQATLNIGTIGHVAHGKSTIVKAISGISTIKFKAELERNITIKLGYANAKIYKCDSKCVRPNCYQSFGSSSPDRLSCKKCGGTLKLVRHVSFVDCPGHDVLMATMLNGTAIMDAVLLLIAANEPCPQPQTTEHLFAVEIMDLKKVLVVQNKIDLVSREQALEQHDQIQKFLKTSNVSGPVIPTAAQIGVNIPALLDFIVNYIPEPVRDSTARPKMIVIRSFDVNRPGTRVCEMSGGVIGGSLVTGMLRVGDKIEIRPGLVIRKGNRFVCRPFVSEIVSLKAESIDLSEAYPGGLIGVGTTMDPSFCKADKLVGQVMGKLGFLPSIFHKITVEYSLFPKTTIQGSSKLKEGEHVLLNIGSTTTGSVIGRINETSGEFDLVKPACCEIGERIAISRKINNHWRLIGHGEIKDGTCIEPEYDAEIDDAQRKAD</sequence>
<gene>
    <name type="ordered locus">ECU01_0700</name>
</gene>
<evidence type="ECO:0000250" key="1">
    <source>
        <dbReference type="UniProtKB" id="P32481"/>
    </source>
</evidence>
<evidence type="ECO:0000250" key="2">
    <source>
        <dbReference type="UniProtKB" id="Q09130"/>
    </source>
</evidence>
<evidence type="ECO:0000255" key="3">
    <source>
        <dbReference type="PROSITE-ProRule" id="PRU01059"/>
    </source>
</evidence>
<evidence type="ECO:0000305" key="4"/>
<keyword id="KW-0963">Cytoplasm</keyword>
<keyword id="KW-0342">GTP-binding</keyword>
<keyword id="KW-0378">Hydrolase</keyword>
<keyword id="KW-0396">Initiation factor</keyword>
<keyword id="KW-0547">Nucleotide-binding</keyword>
<keyword id="KW-0648">Protein biosynthesis</keyword>
<keyword id="KW-1185">Reference proteome</keyword>
<reference key="1">
    <citation type="submission" date="1998-06" db="EMBL/GenBank/DDBJ databases">
        <title>Putative elongation factor 2, from Encephalitozoon cuniculi.</title>
        <authorList>
            <person name="Duffieux F."/>
            <person name="Peyret P."/>
            <person name="Roe B.A."/>
            <person name="Vivares C.P."/>
        </authorList>
    </citation>
    <scope>NUCLEOTIDE SEQUENCE [GENOMIC DNA]</scope>
    <source>
        <strain>GB-M1</strain>
    </source>
</reference>
<reference key="2">
    <citation type="journal article" date="2001" name="Genome Res.">
        <title>Sequence and analysis of chromosome I of the amitochondriate intracellular parasite Encephalitozoon cuniculi (Microspora).</title>
        <authorList>
            <person name="Peyret P."/>
            <person name="Katinka M.D."/>
            <person name="Duprat S."/>
            <person name="Duffieux F."/>
            <person name="Barbe V."/>
            <person name="Barbazanges M."/>
            <person name="Weissenbach J."/>
            <person name="Saurin W."/>
            <person name="Vivares C.P."/>
        </authorList>
    </citation>
    <scope>NUCLEOTIDE SEQUENCE [LARGE SCALE GENOMIC DNA]</scope>
    <source>
        <strain>GB-M1</strain>
    </source>
</reference>
<reference key="3">
    <citation type="journal article" date="2001" name="Nature">
        <title>Genome sequence and gene compaction of the eukaryote parasite Encephalitozoon cuniculi.</title>
        <authorList>
            <person name="Katinka M.D."/>
            <person name="Duprat S."/>
            <person name="Cornillot E."/>
            <person name="Metenier G."/>
            <person name="Thomarat F."/>
            <person name="Prensier G."/>
            <person name="Barbe V."/>
            <person name="Peyretaillade E."/>
            <person name="Brottier P."/>
            <person name="Wincker P."/>
            <person name="Delbac F."/>
            <person name="El Alaoui H."/>
            <person name="Peyret P."/>
            <person name="Saurin W."/>
            <person name="Gouy M."/>
            <person name="Weissenbach J."/>
            <person name="Vivares C.P."/>
        </authorList>
    </citation>
    <scope>NUCLEOTIDE SEQUENCE [LARGE SCALE GENOMIC DNA]</scope>
    <source>
        <strain>GB-M1</strain>
    </source>
</reference>
<name>IF2G_ENCCU</name>
<protein>
    <recommendedName>
        <fullName>Eukaryotic translation initiation factor 2 subunit gamma</fullName>
        <shortName>eIF2-gamma</shortName>
        <ecNumber evidence="1">3.6.5.3</ecNumber>
    </recommendedName>
</protein>
<comment type="function">
    <text evidence="1">As a subunit of eukaryotic initiation factor 2 eIF2, involved in the early steps of protein synthesis. In the presence of GTP, eIF-2 forms a ternary complex with initiator tRNA Met-tRNAi and then recruits the 40S ribosomal complex and initiation factors eIF-1, eIF-1A and eIF-3 to form the 43S pre-initiation complex (43S PIC), a step that determines the rate of protein translation. The 43S PIC binds to mRNA and scans downstream to the initiation codon, where it forms a 48S initiation complex by codon-anticodon base pairing. This leads to the displacement of eIF-1 to allow GTPase-activating protein (GAP) eIF-5-mediated hydrolysis of eIF2-bound GTP. Hydrolysis of GTP and release of Pi, which makes GTP hydrolysis irreversible, causes the release of the eIF-2-GDP binary complex from the 40S subunit, an event that is essential for the subsequent joining of the 60S ribosomal subunit to form an elongation-competent 80S ribosome. In order for eIF-2 to recycle and catalyze another round of initiation, the GDP bound to eIF-2 must be exchanged with GTP by way of a reaction catalyzed by GDP-GTP exchange factor (GEF) eIF-2B.</text>
</comment>
<comment type="catalytic activity">
    <reaction evidence="1">
        <text>GTP + H2O = GDP + phosphate + H(+)</text>
        <dbReference type="Rhea" id="RHEA:19669"/>
        <dbReference type="ChEBI" id="CHEBI:15377"/>
        <dbReference type="ChEBI" id="CHEBI:15378"/>
        <dbReference type="ChEBI" id="CHEBI:37565"/>
        <dbReference type="ChEBI" id="CHEBI:43474"/>
        <dbReference type="ChEBI" id="CHEBI:58189"/>
        <dbReference type="EC" id="3.6.5.3"/>
    </reaction>
</comment>
<comment type="subunit">
    <text evidence="1">Eukaryotic translation initiation factor 2 eIF2 is a heterotrimeric complex composed of an alpha, a beta and a gamma subunit. The factors eIF-1, eIF-2, eIF-3, TIF5/eIF-5 and methionyl-tRNAi form a multifactor complex (MFC) that may bind to the 40S ribosome.</text>
</comment>
<comment type="subcellular location">
    <subcellularLocation>
        <location evidence="2">Cytoplasm</location>
        <location evidence="2">Cytosol</location>
    </subcellularLocation>
</comment>
<comment type="similarity">
    <text evidence="3">Belongs to the TRAFAC class translation factor GTPase superfamily. Classic translation factor GTPase family. EIF2G subfamily.</text>
</comment>
<dbReference type="EC" id="3.6.5.3" evidence="1"/>
<dbReference type="EMBL" id="AJ006823">
    <property type="protein sequence ID" value="CAA07260.1"/>
    <property type="molecule type" value="Genomic_DNA"/>
</dbReference>
<dbReference type="EMBL" id="AL391737">
    <property type="protein sequence ID" value="CAD24940.1"/>
    <property type="molecule type" value="Genomic_DNA"/>
</dbReference>
<dbReference type="PIR" id="T43813">
    <property type="entry name" value="T43813"/>
</dbReference>
<dbReference type="RefSeq" id="XP_965905.1">
    <property type="nucleotide sequence ID" value="XM_960812.1"/>
</dbReference>
<dbReference type="SMR" id="O96719"/>
<dbReference type="FunCoup" id="O96719">
    <property type="interactions" value="228"/>
</dbReference>
<dbReference type="STRING" id="284813.O96719"/>
<dbReference type="GeneID" id="860245"/>
<dbReference type="VEuPathDB" id="MicrosporidiaDB:ECU01_0700"/>
<dbReference type="HOGENOM" id="CLU_027154_0_1_1"/>
<dbReference type="InParanoid" id="O96719"/>
<dbReference type="OMA" id="NIGMVGH"/>
<dbReference type="OrthoDB" id="1045173at2759"/>
<dbReference type="Proteomes" id="UP000000819">
    <property type="component" value="Chromosome I"/>
</dbReference>
<dbReference type="GO" id="GO:0005829">
    <property type="term" value="C:cytosol"/>
    <property type="evidence" value="ECO:0007669"/>
    <property type="project" value="UniProtKB-SubCell"/>
</dbReference>
<dbReference type="GO" id="GO:0005850">
    <property type="term" value="C:eukaryotic translation initiation factor 2 complex"/>
    <property type="evidence" value="ECO:0000250"/>
    <property type="project" value="UniProtKB"/>
</dbReference>
<dbReference type="GO" id="GO:0005525">
    <property type="term" value="F:GTP binding"/>
    <property type="evidence" value="ECO:0007669"/>
    <property type="project" value="UniProtKB-KW"/>
</dbReference>
<dbReference type="GO" id="GO:0003924">
    <property type="term" value="F:GTPase activity"/>
    <property type="evidence" value="ECO:0007669"/>
    <property type="project" value="InterPro"/>
</dbReference>
<dbReference type="GO" id="GO:1990856">
    <property type="term" value="F:methionyl-initiator methionine tRNA binding"/>
    <property type="evidence" value="ECO:0000250"/>
    <property type="project" value="UniProtKB"/>
</dbReference>
<dbReference type="GO" id="GO:0003743">
    <property type="term" value="F:translation initiation factor activity"/>
    <property type="evidence" value="ECO:0007669"/>
    <property type="project" value="UniProtKB-KW"/>
</dbReference>
<dbReference type="GO" id="GO:0002183">
    <property type="term" value="P:cytoplasmic translational initiation"/>
    <property type="evidence" value="ECO:0000250"/>
    <property type="project" value="UniProtKB"/>
</dbReference>
<dbReference type="GO" id="GO:0001731">
    <property type="term" value="P:formation of translation preinitiation complex"/>
    <property type="evidence" value="ECO:0007669"/>
    <property type="project" value="TreeGrafter"/>
</dbReference>
<dbReference type="CDD" id="cd01888">
    <property type="entry name" value="eIF2_gamma"/>
    <property type="match status" value="1"/>
</dbReference>
<dbReference type="CDD" id="cd03688">
    <property type="entry name" value="eIF2_gamma_II"/>
    <property type="match status" value="1"/>
</dbReference>
<dbReference type="CDD" id="cd15490">
    <property type="entry name" value="eIF2_gamma_III"/>
    <property type="match status" value="1"/>
</dbReference>
<dbReference type="FunFam" id="2.40.30.10:FF:000009">
    <property type="entry name" value="Eukaryotic translation initiation factor 2 subunit gamma"/>
    <property type="match status" value="1"/>
</dbReference>
<dbReference type="FunFam" id="3.40.50.300:FF:000065">
    <property type="entry name" value="Eukaryotic translation initiation factor 2 subunit gamma"/>
    <property type="match status" value="1"/>
</dbReference>
<dbReference type="Gene3D" id="3.40.50.300">
    <property type="entry name" value="P-loop containing nucleotide triphosphate hydrolases"/>
    <property type="match status" value="1"/>
</dbReference>
<dbReference type="Gene3D" id="2.40.30.10">
    <property type="entry name" value="Translation factors"/>
    <property type="match status" value="2"/>
</dbReference>
<dbReference type="InterPro" id="IPR050543">
    <property type="entry name" value="eIF2G"/>
</dbReference>
<dbReference type="InterPro" id="IPR015256">
    <property type="entry name" value="eIF2g_C"/>
</dbReference>
<dbReference type="InterPro" id="IPR044127">
    <property type="entry name" value="eIF2g_dom_2"/>
</dbReference>
<dbReference type="InterPro" id="IPR044128">
    <property type="entry name" value="eIF2g_GTP-bd"/>
</dbReference>
<dbReference type="InterPro" id="IPR027417">
    <property type="entry name" value="P-loop_NTPase"/>
</dbReference>
<dbReference type="InterPro" id="IPR000795">
    <property type="entry name" value="T_Tr_GTP-bd_dom"/>
</dbReference>
<dbReference type="InterPro" id="IPR009000">
    <property type="entry name" value="Transl_B-barrel_sf"/>
</dbReference>
<dbReference type="InterPro" id="IPR009001">
    <property type="entry name" value="Transl_elong_EF1A/Init_IF2_C"/>
</dbReference>
<dbReference type="NCBIfam" id="NF003077">
    <property type="entry name" value="PRK04000.1"/>
    <property type="match status" value="1"/>
</dbReference>
<dbReference type="PANTHER" id="PTHR42854">
    <property type="entry name" value="EUKARYOTIC TRANSLATION INITIATION FACTOR 2 SUBUNIT 3 FAMILY MEMBER"/>
    <property type="match status" value="1"/>
</dbReference>
<dbReference type="PANTHER" id="PTHR42854:SF3">
    <property type="entry name" value="EUKARYOTIC TRANSLATION INITIATION FACTOR 2 SUBUNIT 3-RELATED"/>
    <property type="match status" value="1"/>
</dbReference>
<dbReference type="Pfam" id="PF09173">
    <property type="entry name" value="eIF2_C"/>
    <property type="match status" value="1"/>
</dbReference>
<dbReference type="Pfam" id="PF00009">
    <property type="entry name" value="GTP_EFTU"/>
    <property type="match status" value="1"/>
</dbReference>
<dbReference type="PRINTS" id="PR00315">
    <property type="entry name" value="ELONGATNFCT"/>
</dbReference>
<dbReference type="SUPFAM" id="SSF50465">
    <property type="entry name" value="EF-Tu/eEF-1alpha/eIF2-gamma C-terminal domain"/>
    <property type="match status" value="1"/>
</dbReference>
<dbReference type="SUPFAM" id="SSF52540">
    <property type="entry name" value="P-loop containing nucleoside triphosphate hydrolases"/>
    <property type="match status" value="1"/>
</dbReference>
<dbReference type="SUPFAM" id="SSF50447">
    <property type="entry name" value="Translation proteins"/>
    <property type="match status" value="1"/>
</dbReference>
<dbReference type="PROSITE" id="PS51722">
    <property type="entry name" value="G_TR_2"/>
    <property type="match status" value="1"/>
</dbReference>